<reference key="1">
    <citation type="journal article" date="2004" name="DNA Res.">
        <title>Complete nucleotide sequence of the sugarcane (Saccharum officinarum) chloroplast genome: a comparative analysis of four monocot chloroplast genomes.</title>
        <authorList>
            <person name="Asano T."/>
            <person name="Tsudzuki T."/>
            <person name="Takahashi S."/>
            <person name="Shimada H."/>
            <person name="Kadowaki K."/>
        </authorList>
    </citation>
    <scope>NUCLEOTIDE SEQUENCE [LARGE SCALE GENOMIC DNA]</scope>
</reference>
<organism>
    <name type="scientific">Saccharum officinarum</name>
    <name type="common">Sugarcane</name>
    <dbReference type="NCBI Taxonomy" id="4547"/>
    <lineage>
        <taxon>Eukaryota</taxon>
        <taxon>Viridiplantae</taxon>
        <taxon>Streptophyta</taxon>
        <taxon>Embryophyta</taxon>
        <taxon>Tracheophyta</taxon>
        <taxon>Spermatophyta</taxon>
        <taxon>Magnoliopsida</taxon>
        <taxon>Liliopsida</taxon>
        <taxon>Poales</taxon>
        <taxon>Poaceae</taxon>
        <taxon>PACMAD clade</taxon>
        <taxon>Panicoideae</taxon>
        <taxon>Andropogonodae</taxon>
        <taxon>Andropogoneae</taxon>
        <taxon>Saccharinae</taxon>
        <taxon>Saccharum</taxon>
        <taxon>Saccharum officinarum species complex</taxon>
    </lineage>
</organism>
<evidence type="ECO:0000255" key="1">
    <source>
        <dbReference type="HAMAP-Rule" id="MF_00432"/>
    </source>
</evidence>
<keyword id="KW-0150">Chloroplast</keyword>
<keyword id="KW-0249">Electron transport</keyword>
<keyword id="KW-0472">Membrane</keyword>
<keyword id="KW-0602">Photosynthesis</keyword>
<keyword id="KW-0934">Plastid</keyword>
<keyword id="KW-0793">Thylakoid</keyword>
<keyword id="KW-0812">Transmembrane</keyword>
<keyword id="KW-1133">Transmembrane helix</keyword>
<keyword id="KW-0813">Transport</keyword>
<gene>
    <name evidence="1" type="primary">petG</name>
</gene>
<dbReference type="EMBL" id="AP006714">
    <property type="protein sequence ID" value="BAD27311.1"/>
    <property type="molecule type" value="Genomic_DNA"/>
</dbReference>
<dbReference type="RefSeq" id="YP_009389589.1">
    <property type="nucleotide sequence ID" value="NC_035224.1"/>
</dbReference>
<dbReference type="SMR" id="Q6ENU5"/>
<dbReference type="GeneID" id="33347802"/>
<dbReference type="GO" id="GO:0009535">
    <property type="term" value="C:chloroplast thylakoid membrane"/>
    <property type="evidence" value="ECO:0007669"/>
    <property type="project" value="UniProtKB-SubCell"/>
</dbReference>
<dbReference type="GO" id="GO:0009512">
    <property type="term" value="C:cytochrome b6f complex"/>
    <property type="evidence" value="ECO:0007669"/>
    <property type="project" value="InterPro"/>
</dbReference>
<dbReference type="GO" id="GO:0045158">
    <property type="term" value="F:electron transporter, transferring electrons within cytochrome b6/f complex of photosystem II activity"/>
    <property type="evidence" value="ECO:0007669"/>
    <property type="project" value="UniProtKB-UniRule"/>
</dbReference>
<dbReference type="GO" id="GO:0017004">
    <property type="term" value="P:cytochrome complex assembly"/>
    <property type="evidence" value="ECO:0007669"/>
    <property type="project" value="UniProtKB-UniRule"/>
</dbReference>
<dbReference type="GO" id="GO:0015979">
    <property type="term" value="P:photosynthesis"/>
    <property type="evidence" value="ECO:0007669"/>
    <property type="project" value="UniProtKB-KW"/>
</dbReference>
<dbReference type="HAMAP" id="MF_00432">
    <property type="entry name" value="Cytb6_f_PetG"/>
    <property type="match status" value="1"/>
</dbReference>
<dbReference type="InterPro" id="IPR003683">
    <property type="entry name" value="Cyt_6/f_cplx_su5"/>
</dbReference>
<dbReference type="InterPro" id="IPR036099">
    <property type="entry name" value="Cyt_6/f_cplx_su5_sf"/>
</dbReference>
<dbReference type="NCBIfam" id="NF001907">
    <property type="entry name" value="PRK00665.1"/>
    <property type="match status" value="1"/>
</dbReference>
<dbReference type="Pfam" id="PF02529">
    <property type="entry name" value="PetG"/>
    <property type="match status" value="1"/>
</dbReference>
<dbReference type="PIRSF" id="PIRSF000034">
    <property type="entry name" value="Cyt_b6-f_V"/>
    <property type="match status" value="1"/>
</dbReference>
<dbReference type="SUPFAM" id="SSF103446">
    <property type="entry name" value="PetG subunit of the cytochrome b6f complex"/>
    <property type="match status" value="1"/>
</dbReference>
<name>PETG_SACOF</name>
<sequence>MIEVFLFGIVLGLIPITLAGLFVTAYLQYRRGDQLDL</sequence>
<proteinExistence type="inferred from homology"/>
<comment type="function">
    <text evidence="1">Component of the cytochrome b6-f complex, which mediates electron transfer between photosystem II (PSII) and photosystem I (PSI), cyclic electron flow around PSI, and state transitions. PetG is required for either the stability or assembly of the cytochrome b6-f complex.</text>
</comment>
<comment type="subunit">
    <text evidence="1">The 4 large subunits of the cytochrome b6-f complex are cytochrome b6, subunit IV (17 kDa polypeptide, PetD), cytochrome f and the Rieske protein, while the 4 small subunits are PetG, PetL, PetM and PetN. The complex functions as a dimer.</text>
</comment>
<comment type="subcellular location">
    <subcellularLocation>
        <location evidence="1">Plastid</location>
        <location evidence="1">Chloroplast thylakoid membrane</location>
        <topology evidence="1">Single-pass membrane protein</topology>
    </subcellularLocation>
</comment>
<comment type="similarity">
    <text evidence="1">Belongs to the PetG family.</text>
</comment>
<feature type="chain" id="PRO_0000216403" description="Cytochrome b6-f complex subunit 5">
    <location>
        <begin position="1"/>
        <end position="37"/>
    </location>
</feature>
<feature type="transmembrane region" description="Helical" evidence="1">
    <location>
        <begin position="5"/>
        <end position="25"/>
    </location>
</feature>
<geneLocation type="chloroplast"/>
<accession>Q6ENU5</accession>
<protein>
    <recommendedName>
        <fullName evidence="1">Cytochrome b6-f complex subunit 5</fullName>
    </recommendedName>
    <alternativeName>
        <fullName evidence="1">Cytochrome b6-f complex subunit PetG</fullName>
    </alternativeName>
    <alternativeName>
        <fullName evidence="1">Cytochrome b6-f complex subunit V</fullName>
    </alternativeName>
</protein>